<feature type="chain" id="PRO_1000164249" description="Chaperone protein DnaJ">
    <location>
        <begin position="1"/>
        <end position="377"/>
    </location>
</feature>
<feature type="domain" description="J" evidence="1">
    <location>
        <begin position="5"/>
        <end position="70"/>
    </location>
</feature>
<feature type="repeat" description="CXXCXGXG motif">
    <location>
        <begin position="150"/>
        <end position="157"/>
    </location>
</feature>
<feature type="repeat" description="CXXCXGXG motif">
    <location>
        <begin position="167"/>
        <end position="174"/>
    </location>
</feature>
<feature type="repeat" description="CXXCXGXG motif">
    <location>
        <begin position="193"/>
        <end position="200"/>
    </location>
</feature>
<feature type="repeat" description="CXXCXGXG motif">
    <location>
        <begin position="207"/>
        <end position="214"/>
    </location>
</feature>
<feature type="zinc finger region" description="CR-type" evidence="1">
    <location>
        <begin position="137"/>
        <end position="219"/>
    </location>
</feature>
<feature type="binding site" evidence="1">
    <location>
        <position position="150"/>
    </location>
    <ligand>
        <name>Zn(2+)</name>
        <dbReference type="ChEBI" id="CHEBI:29105"/>
        <label>1</label>
    </ligand>
</feature>
<feature type="binding site" evidence="1">
    <location>
        <position position="153"/>
    </location>
    <ligand>
        <name>Zn(2+)</name>
        <dbReference type="ChEBI" id="CHEBI:29105"/>
        <label>1</label>
    </ligand>
</feature>
<feature type="binding site" evidence="1">
    <location>
        <position position="167"/>
    </location>
    <ligand>
        <name>Zn(2+)</name>
        <dbReference type="ChEBI" id="CHEBI:29105"/>
        <label>2</label>
    </ligand>
</feature>
<feature type="binding site" evidence="1">
    <location>
        <position position="170"/>
    </location>
    <ligand>
        <name>Zn(2+)</name>
        <dbReference type="ChEBI" id="CHEBI:29105"/>
        <label>2</label>
    </ligand>
</feature>
<feature type="binding site" evidence="1">
    <location>
        <position position="193"/>
    </location>
    <ligand>
        <name>Zn(2+)</name>
        <dbReference type="ChEBI" id="CHEBI:29105"/>
        <label>2</label>
    </ligand>
</feature>
<feature type="binding site" evidence="1">
    <location>
        <position position="196"/>
    </location>
    <ligand>
        <name>Zn(2+)</name>
        <dbReference type="ChEBI" id="CHEBI:29105"/>
        <label>2</label>
    </ligand>
</feature>
<feature type="binding site" evidence="1">
    <location>
        <position position="207"/>
    </location>
    <ligand>
        <name>Zn(2+)</name>
        <dbReference type="ChEBI" id="CHEBI:29105"/>
        <label>1</label>
    </ligand>
</feature>
<feature type="binding site" evidence="1">
    <location>
        <position position="210"/>
    </location>
    <ligand>
        <name>Zn(2+)</name>
        <dbReference type="ChEBI" id="CHEBI:29105"/>
        <label>1</label>
    </ligand>
</feature>
<sequence length="377" mass="40796">MANKDYYELLGLQKGASDDEIKRAFRKLAVKYHPDRNQGNAEAEEKFKEINEAYQVLSDPEKKAKYDQFGSAAFDGSGGFGGGGFGGFDGFDMGGFGDIFESFFGGGGSNSRRRNGPVRGNDIEYTITLTFEEAVFGVEKEISVTRNENCEHCHGSGAEPGTNAKTCPTCSGSGQVRVQRQTPLGSFVSTSTCDTCRGTGKIIEKPCSECRGKGSVRKTRKIKVNIPAGVDTGNVMPLRGQGEHGLRGGSPGDLYVRINVTPSKVFTRKGNDVYIDAHISMPKAALGTEITVATVDGNVKYTVPPGTQSGTMFRLKGKGIQRVNSNGKGDQYVKVIVDIPKTLNKEQKEALYDFMRASGEEFDEANVPKKKLFGKNK</sequence>
<reference key="1">
    <citation type="submission" date="2007-06" db="EMBL/GenBank/DDBJ databases">
        <title>Complete sequence of Clostridium beijerinckii NCIMB 8052.</title>
        <authorList>
            <consortium name="US DOE Joint Genome Institute"/>
            <person name="Copeland A."/>
            <person name="Lucas S."/>
            <person name="Lapidus A."/>
            <person name="Barry K."/>
            <person name="Detter J.C."/>
            <person name="Glavina del Rio T."/>
            <person name="Hammon N."/>
            <person name="Israni S."/>
            <person name="Dalin E."/>
            <person name="Tice H."/>
            <person name="Pitluck S."/>
            <person name="Sims D."/>
            <person name="Brettin T."/>
            <person name="Bruce D."/>
            <person name="Tapia R."/>
            <person name="Brainard J."/>
            <person name="Schmutz J."/>
            <person name="Larimer F."/>
            <person name="Land M."/>
            <person name="Hauser L."/>
            <person name="Kyrpides N."/>
            <person name="Mikhailova N."/>
            <person name="Bennet G."/>
            <person name="Cann I."/>
            <person name="Chen J.-S."/>
            <person name="Contreras A.L."/>
            <person name="Jones D."/>
            <person name="Kashket E."/>
            <person name="Mitchell W."/>
            <person name="Stoddard S."/>
            <person name="Schwarz W."/>
            <person name="Qureshi N."/>
            <person name="Young M."/>
            <person name="Shi Z."/>
            <person name="Ezeji T."/>
            <person name="White B."/>
            <person name="Blaschek H."/>
            <person name="Richardson P."/>
        </authorList>
    </citation>
    <scope>NUCLEOTIDE SEQUENCE [LARGE SCALE GENOMIC DNA]</scope>
    <source>
        <strain>ATCC 51743 / NCIMB 8052</strain>
    </source>
</reference>
<dbReference type="EMBL" id="CP000721">
    <property type="protein sequence ID" value="ABR33015.1"/>
    <property type="molecule type" value="Genomic_DNA"/>
</dbReference>
<dbReference type="RefSeq" id="WP_011968175.1">
    <property type="nucleotide sequence ID" value="NC_009617.1"/>
</dbReference>
<dbReference type="SMR" id="A6LRN5"/>
<dbReference type="GeneID" id="66343772"/>
<dbReference type="KEGG" id="cbe:Cbei_0831"/>
<dbReference type="eggNOG" id="COG0484">
    <property type="taxonomic scope" value="Bacteria"/>
</dbReference>
<dbReference type="HOGENOM" id="CLU_017633_0_7_9"/>
<dbReference type="Proteomes" id="UP000000565">
    <property type="component" value="Chromosome"/>
</dbReference>
<dbReference type="GO" id="GO:0005737">
    <property type="term" value="C:cytoplasm"/>
    <property type="evidence" value="ECO:0007669"/>
    <property type="project" value="UniProtKB-SubCell"/>
</dbReference>
<dbReference type="GO" id="GO:0005524">
    <property type="term" value="F:ATP binding"/>
    <property type="evidence" value="ECO:0007669"/>
    <property type="project" value="InterPro"/>
</dbReference>
<dbReference type="GO" id="GO:0031072">
    <property type="term" value="F:heat shock protein binding"/>
    <property type="evidence" value="ECO:0007669"/>
    <property type="project" value="InterPro"/>
</dbReference>
<dbReference type="GO" id="GO:0051082">
    <property type="term" value="F:unfolded protein binding"/>
    <property type="evidence" value="ECO:0007669"/>
    <property type="project" value="UniProtKB-UniRule"/>
</dbReference>
<dbReference type="GO" id="GO:0008270">
    <property type="term" value="F:zinc ion binding"/>
    <property type="evidence" value="ECO:0007669"/>
    <property type="project" value="UniProtKB-UniRule"/>
</dbReference>
<dbReference type="GO" id="GO:0051085">
    <property type="term" value="P:chaperone cofactor-dependent protein refolding"/>
    <property type="evidence" value="ECO:0007669"/>
    <property type="project" value="TreeGrafter"/>
</dbReference>
<dbReference type="GO" id="GO:0006260">
    <property type="term" value="P:DNA replication"/>
    <property type="evidence" value="ECO:0007669"/>
    <property type="project" value="UniProtKB-KW"/>
</dbReference>
<dbReference type="GO" id="GO:0042026">
    <property type="term" value="P:protein refolding"/>
    <property type="evidence" value="ECO:0007669"/>
    <property type="project" value="TreeGrafter"/>
</dbReference>
<dbReference type="GO" id="GO:0009408">
    <property type="term" value="P:response to heat"/>
    <property type="evidence" value="ECO:0007669"/>
    <property type="project" value="InterPro"/>
</dbReference>
<dbReference type="CDD" id="cd06257">
    <property type="entry name" value="DnaJ"/>
    <property type="match status" value="1"/>
</dbReference>
<dbReference type="CDD" id="cd10747">
    <property type="entry name" value="DnaJ_C"/>
    <property type="match status" value="1"/>
</dbReference>
<dbReference type="CDD" id="cd10719">
    <property type="entry name" value="DnaJ_zf"/>
    <property type="match status" value="1"/>
</dbReference>
<dbReference type="FunFam" id="2.60.260.20:FF:000005">
    <property type="entry name" value="Chaperone protein dnaJ 1, mitochondrial"/>
    <property type="match status" value="1"/>
</dbReference>
<dbReference type="FunFam" id="1.10.287.110:FF:000031">
    <property type="entry name" value="Molecular chaperone DnaJ"/>
    <property type="match status" value="1"/>
</dbReference>
<dbReference type="FunFam" id="2.10.230.10:FF:000002">
    <property type="entry name" value="Molecular chaperone DnaJ"/>
    <property type="match status" value="1"/>
</dbReference>
<dbReference type="Gene3D" id="1.10.287.110">
    <property type="entry name" value="DnaJ domain"/>
    <property type="match status" value="1"/>
</dbReference>
<dbReference type="Gene3D" id="2.10.230.10">
    <property type="entry name" value="Heat shock protein DnaJ, cysteine-rich domain"/>
    <property type="match status" value="1"/>
</dbReference>
<dbReference type="Gene3D" id="2.60.260.20">
    <property type="entry name" value="Urease metallochaperone UreE, N-terminal domain"/>
    <property type="match status" value="2"/>
</dbReference>
<dbReference type="HAMAP" id="MF_01152">
    <property type="entry name" value="DnaJ"/>
    <property type="match status" value="1"/>
</dbReference>
<dbReference type="InterPro" id="IPR012724">
    <property type="entry name" value="DnaJ"/>
</dbReference>
<dbReference type="InterPro" id="IPR002939">
    <property type="entry name" value="DnaJ_C"/>
</dbReference>
<dbReference type="InterPro" id="IPR001623">
    <property type="entry name" value="DnaJ_domain"/>
</dbReference>
<dbReference type="InterPro" id="IPR018253">
    <property type="entry name" value="DnaJ_domain_CS"/>
</dbReference>
<dbReference type="InterPro" id="IPR008971">
    <property type="entry name" value="HSP40/DnaJ_pept-bd"/>
</dbReference>
<dbReference type="InterPro" id="IPR001305">
    <property type="entry name" value="HSP_DnaJ_Cys-rich_dom"/>
</dbReference>
<dbReference type="InterPro" id="IPR036410">
    <property type="entry name" value="HSP_DnaJ_Cys-rich_dom_sf"/>
</dbReference>
<dbReference type="InterPro" id="IPR036869">
    <property type="entry name" value="J_dom_sf"/>
</dbReference>
<dbReference type="NCBIfam" id="TIGR02349">
    <property type="entry name" value="DnaJ_bact"/>
    <property type="match status" value="1"/>
</dbReference>
<dbReference type="NCBIfam" id="NF008035">
    <property type="entry name" value="PRK10767.1"/>
    <property type="match status" value="1"/>
</dbReference>
<dbReference type="NCBIfam" id="NF010890">
    <property type="entry name" value="PRK14297.1"/>
    <property type="match status" value="1"/>
</dbReference>
<dbReference type="PANTHER" id="PTHR43096:SF48">
    <property type="entry name" value="CHAPERONE PROTEIN DNAJ"/>
    <property type="match status" value="1"/>
</dbReference>
<dbReference type="PANTHER" id="PTHR43096">
    <property type="entry name" value="DNAJ HOMOLOG 1, MITOCHONDRIAL-RELATED"/>
    <property type="match status" value="1"/>
</dbReference>
<dbReference type="Pfam" id="PF00226">
    <property type="entry name" value="DnaJ"/>
    <property type="match status" value="1"/>
</dbReference>
<dbReference type="Pfam" id="PF01556">
    <property type="entry name" value="DnaJ_C"/>
    <property type="match status" value="1"/>
</dbReference>
<dbReference type="Pfam" id="PF00684">
    <property type="entry name" value="DnaJ_CXXCXGXG"/>
    <property type="match status" value="1"/>
</dbReference>
<dbReference type="PRINTS" id="PR00625">
    <property type="entry name" value="JDOMAIN"/>
</dbReference>
<dbReference type="SMART" id="SM00271">
    <property type="entry name" value="DnaJ"/>
    <property type="match status" value="1"/>
</dbReference>
<dbReference type="SUPFAM" id="SSF46565">
    <property type="entry name" value="Chaperone J-domain"/>
    <property type="match status" value="1"/>
</dbReference>
<dbReference type="SUPFAM" id="SSF57938">
    <property type="entry name" value="DnaJ/Hsp40 cysteine-rich domain"/>
    <property type="match status" value="1"/>
</dbReference>
<dbReference type="SUPFAM" id="SSF49493">
    <property type="entry name" value="HSP40/DnaJ peptide-binding domain"/>
    <property type="match status" value="2"/>
</dbReference>
<dbReference type="PROSITE" id="PS00636">
    <property type="entry name" value="DNAJ_1"/>
    <property type="match status" value="1"/>
</dbReference>
<dbReference type="PROSITE" id="PS50076">
    <property type="entry name" value="DNAJ_2"/>
    <property type="match status" value="1"/>
</dbReference>
<dbReference type="PROSITE" id="PS51188">
    <property type="entry name" value="ZF_CR"/>
    <property type="match status" value="1"/>
</dbReference>
<keyword id="KW-0143">Chaperone</keyword>
<keyword id="KW-0963">Cytoplasm</keyword>
<keyword id="KW-0235">DNA replication</keyword>
<keyword id="KW-0479">Metal-binding</keyword>
<keyword id="KW-0677">Repeat</keyword>
<keyword id="KW-0346">Stress response</keyword>
<keyword id="KW-0862">Zinc</keyword>
<keyword id="KW-0863">Zinc-finger</keyword>
<gene>
    <name evidence="1" type="primary">dnaJ</name>
    <name type="ordered locus">Cbei_0831</name>
</gene>
<comment type="function">
    <text evidence="1">Participates actively in the response to hyperosmotic and heat shock by preventing the aggregation of stress-denatured proteins and by disaggregating proteins, also in an autonomous, DnaK-independent fashion. Unfolded proteins bind initially to DnaJ; upon interaction with the DnaJ-bound protein, DnaK hydrolyzes its bound ATP, resulting in the formation of a stable complex. GrpE releases ADP from DnaK; ATP binding to DnaK triggers the release of the substrate protein, thus completing the reaction cycle. Several rounds of ATP-dependent interactions between DnaJ, DnaK and GrpE are required for fully efficient folding. Also involved, together with DnaK and GrpE, in the DNA replication of plasmids through activation of initiation proteins.</text>
</comment>
<comment type="cofactor">
    <cofactor evidence="1">
        <name>Zn(2+)</name>
        <dbReference type="ChEBI" id="CHEBI:29105"/>
    </cofactor>
    <text evidence="1">Binds 2 Zn(2+) ions per monomer.</text>
</comment>
<comment type="subunit">
    <text evidence="1">Homodimer.</text>
</comment>
<comment type="subcellular location">
    <subcellularLocation>
        <location evidence="1">Cytoplasm</location>
    </subcellularLocation>
</comment>
<comment type="domain">
    <text evidence="1">The J domain is necessary and sufficient to stimulate DnaK ATPase activity. Zinc center 1 plays an important role in the autonomous, DnaK-independent chaperone activity of DnaJ. Zinc center 2 is essential for interaction with DnaK and for DnaJ activity.</text>
</comment>
<comment type="similarity">
    <text evidence="1">Belongs to the DnaJ family.</text>
</comment>
<name>DNAJ_CLOB8</name>
<proteinExistence type="inferred from homology"/>
<evidence type="ECO:0000255" key="1">
    <source>
        <dbReference type="HAMAP-Rule" id="MF_01152"/>
    </source>
</evidence>
<accession>A6LRN5</accession>
<organism>
    <name type="scientific">Clostridium beijerinckii (strain ATCC 51743 / NCIMB 8052)</name>
    <name type="common">Clostridium acetobutylicum</name>
    <dbReference type="NCBI Taxonomy" id="290402"/>
    <lineage>
        <taxon>Bacteria</taxon>
        <taxon>Bacillati</taxon>
        <taxon>Bacillota</taxon>
        <taxon>Clostridia</taxon>
        <taxon>Eubacteriales</taxon>
        <taxon>Clostridiaceae</taxon>
        <taxon>Clostridium</taxon>
    </lineage>
</organism>
<protein>
    <recommendedName>
        <fullName evidence="1">Chaperone protein DnaJ</fullName>
    </recommendedName>
</protein>